<feature type="chain" id="PRO_0000051982" description="Cytochrome P450 26A1">
    <location>
        <begin position="1"/>
        <end position="492"/>
    </location>
</feature>
<feature type="binding site" description="axial binding residue" evidence="4">
    <location>
        <position position="437"/>
    </location>
    <ligand>
        <name>heme</name>
        <dbReference type="ChEBI" id="CHEBI:30413"/>
    </ligand>
    <ligandPart>
        <name>Fe</name>
        <dbReference type="ChEBI" id="CHEBI:18248"/>
    </ligandPart>
</feature>
<feature type="sequence conflict" description="In Ref. 2; AAD56546." evidence="7" ref="2">
    <original>I</original>
    <variation>V</variation>
    <location>
        <position position="371"/>
    </location>
</feature>
<feature type="sequence conflict" description="In Ref. 2; AAD56546." evidence="7" ref="2">
    <original>GPI</original>
    <variation>SPT</variation>
    <location>
        <begin position="472"/>
        <end position="474"/>
    </location>
</feature>
<name>CP26A_CHICK</name>
<gene>
    <name type="primary">CYP26A1</name>
    <name type="synonym">CYP26</name>
</gene>
<comment type="function">
    <text evidence="2 3 5">A cytochrome P450 monooxygenase involved in the metabolism of retinoates (RAs), the active metabolites of vitamin A, and critical signaling molecules in animals (PubMed:10588879). RAs exist as at least four different isomers: all-trans-RA (atRA), 9-cis-RA, 13-cis-RA, and 9,13-dicis-RA, where atRA is considered to be the biologically active isomer, although 9-cis-RA and 13-cis-RA also have activity (By similarity). Catalyzes the hydroxylation of atRA primarily at C-4 and C-18, thereby contributing to the regulation of atRA homeostasis and signaling (By similarity) (PubMed:10588879). Hydroxylation of atRA limits its biological activity and initiates a degradative process leading to its eventual elimination (By similarity). Involved in the convertion of atRA to all-trans-4-oxo-RA. Able to metabolize other RAs such as 9-cis, 13-cis and 9,13-di-cis RA. Can oxidize all-trans-13,14-dihydroretinoate (DRA) to metabolites which could include all-trans-4-oxo-DRA, all-trans-4-hydroxy-DRA, all-trans-5,8-epoxy-DRA, and all-trans-18-hydroxy-DRA (By similarity). May play a role in the oxidative metabolism of xenobiotics such as tazarotenic acid (By similarity).</text>
</comment>
<comment type="catalytic activity">
    <reaction evidence="5">
        <text>all-trans-retinoate + reduced [NADPH--hemoprotein reductase] + O2 = all-trans-(4S)-hydroxyretinoate + oxidized [NADPH--hemoprotein reductase] + H2O + H(+)</text>
        <dbReference type="Rhea" id="RHEA:51492"/>
        <dbReference type="Rhea" id="RHEA-COMP:11964"/>
        <dbReference type="Rhea" id="RHEA-COMP:11965"/>
        <dbReference type="ChEBI" id="CHEBI:15377"/>
        <dbReference type="ChEBI" id="CHEBI:15378"/>
        <dbReference type="ChEBI" id="CHEBI:15379"/>
        <dbReference type="ChEBI" id="CHEBI:35291"/>
        <dbReference type="ChEBI" id="CHEBI:57618"/>
        <dbReference type="ChEBI" id="CHEBI:58210"/>
        <dbReference type="ChEBI" id="CHEBI:134185"/>
    </reaction>
    <physiologicalReaction direction="left-to-right" evidence="8">
        <dbReference type="Rhea" id="RHEA:51493"/>
    </physiologicalReaction>
</comment>
<comment type="catalytic activity">
    <reaction evidence="2">
        <text>all-trans-(4S)-hydroxyretinoate + reduced [NADPH--hemoprotein reductase] + O2 = all-trans-(4S,16)-dihydroxyretinoate + oxidized [NADPH--hemoprotein reductase] + H2O + H(+)</text>
        <dbReference type="Rhea" id="RHEA:51632"/>
        <dbReference type="Rhea" id="RHEA-COMP:11964"/>
        <dbReference type="Rhea" id="RHEA-COMP:11965"/>
        <dbReference type="ChEBI" id="CHEBI:15377"/>
        <dbReference type="ChEBI" id="CHEBI:15378"/>
        <dbReference type="ChEBI" id="CHEBI:15379"/>
        <dbReference type="ChEBI" id="CHEBI:57618"/>
        <dbReference type="ChEBI" id="CHEBI:58210"/>
        <dbReference type="ChEBI" id="CHEBI:134185"/>
        <dbReference type="ChEBI" id="CHEBI:134233"/>
    </reaction>
    <physiologicalReaction direction="left-to-right" evidence="2">
        <dbReference type="Rhea" id="RHEA:51633"/>
    </physiologicalReaction>
</comment>
<comment type="catalytic activity">
    <reaction evidence="3">
        <text>all-trans-retinoate + reduced [NADPH--hemoprotein reductase] + O2 = all-trans-18-hydroxyretinoate + oxidized [NADPH--hemoprotein reductase] + H2O + H(+)</text>
        <dbReference type="Rhea" id="RHEA:55856"/>
        <dbReference type="Rhea" id="RHEA-COMP:11964"/>
        <dbReference type="Rhea" id="RHEA-COMP:11965"/>
        <dbReference type="ChEBI" id="CHEBI:15377"/>
        <dbReference type="ChEBI" id="CHEBI:15378"/>
        <dbReference type="ChEBI" id="CHEBI:15379"/>
        <dbReference type="ChEBI" id="CHEBI:35291"/>
        <dbReference type="ChEBI" id="CHEBI:57618"/>
        <dbReference type="ChEBI" id="CHEBI:58210"/>
        <dbReference type="ChEBI" id="CHEBI:139258"/>
    </reaction>
    <physiologicalReaction direction="left-to-right" evidence="3">
        <dbReference type="Rhea" id="RHEA:55857"/>
    </physiologicalReaction>
</comment>
<comment type="cofactor">
    <cofactor evidence="1">
        <name>heme</name>
        <dbReference type="ChEBI" id="CHEBI:30413"/>
    </cofactor>
</comment>
<comment type="subcellular location">
    <subcellularLocation>
        <location evidence="2">Endoplasmic reticulum membrane</location>
        <topology>Peripheral membrane protein</topology>
    </subcellularLocation>
    <subcellularLocation>
        <location evidence="2">Microsome membrane</location>
        <topology>Peripheral membrane protein</topology>
    </subcellularLocation>
</comment>
<comment type="developmental stage">
    <text evidence="5">Expressed at stage 4 in the ectoderm, stage 5-7 in the nascent notochord and at stage 7 its expression decreases in the anterior part of the embryo. From stage 7-10 its expression is restricted to the dorsal folds of the neural tube and to rhombomere 2. At stage 10, it is expressed in the lateral plate endoderm and in the tail bud and by stage 11/12 it disappears in the neural tube, followed by a confined expression at stage 12 to dorsal neural tube and at stage 15 an increasing expression in the ectoderm.</text>
</comment>
<comment type="induction">
    <text evidence="5">By retinoic acid.</text>
</comment>
<comment type="similarity">
    <text evidence="7">Belongs to the cytochrome P450 family.</text>
</comment>
<protein>
    <recommendedName>
        <fullName>Cytochrome P450 26A1</fullName>
        <shortName>CYP26A1</shortName>
        <ecNumber evidence="5">1.14.13.-</ecNumber>
    </recommendedName>
    <alternativeName>
        <fullName evidence="6">Retinoic acid-degrading enzyme CYP26</fullName>
    </alternativeName>
</protein>
<keyword id="KW-0256">Endoplasmic reticulum</keyword>
<keyword id="KW-0349">Heme</keyword>
<keyword id="KW-0408">Iron</keyword>
<keyword id="KW-0443">Lipid metabolism</keyword>
<keyword id="KW-0472">Membrane</keyword>
<keyword id="KW-0479">Metal-binding</keyword>
<keyword id="KW-0492">Microsome</keyword>
<keyword id="KW-0503">Monooxygenase</keyword>
<keyword id="KW-0560">Oxidoreductase</keyword>
<keyword id="KW-1185">Reference proteome</keyword>
<organism>
    <name type="scientific">Gallus gallus</name>
    <name type="common">Chicken</name>
    <dbReference type="NCBI Taxonomy" id="9031"/>
    <lineage>
        <taxon>Eukaryota</taxon>
        <taxon>Metazoa</taxon>
        <taxon>Chordata</taxon>
        <taxon>Craniata</taxon>
        <taxon>Vertebrata</taxon>
        <taxon>Euteleostomi</taxon>
        <taxon>Archelosauria</taxon>
        <taxon>Archosauria</taxon>
        <taxon>Dinosauria</taxon>
        <taxon>Saurischia</taxon>
        <taxon>Theropoda</taxon>
        <taxon>Coelurosauria</taxon>
        <taxon>Aves</taxon>
        <taxon>Neognathae</taxon>
        <taxon>Galloanserae</taxon>
        <taxon>Galliformes</taxon>
        <taxon>Phasianidae</taxon>
        <taxon>Phasianinae</taxon>
        <taxon>Gallus</taxon>
    </lineage>
</organism>
<reference key="1">
    <citation type="journal article" date="1999" name="Dev. Biol.">
        <title>Complementary domains of retinoic acid production and degradation in the early chick embryo.</title>
        <authorList>
            <person name="Swindell E.C."/>
            <person name="Thaller C."/>
            <person name="Sockanathan S."/>
            <person name="Petkovich M."/>
            <person name="Jessell T.M."/>
            <person name="Eichele G."/>
        </authorList>
    </citation>
    <scope>NUCLEOTIDE SEQUENCE [MRNA]</scope>
    <scope>FUNCTION</scope>
    <scope>CATALYTIC ACTIVITY</scope>
    <scope>INDUCTION</scope>
    <scope>DEVELOPMENTAL STAGE</scope>
    <source>
        <tissue>Embryonic spinal cord</tissue>
    </source>
</reference>
<reference key="2">
    <citation type="submission" date="1999-09" db="EMBL/GenBank/DDBJ databases">
        <authorList>
            <person name="Martinez-Ceballos E."/>
            <person name="Burdsal C.A."/>
        </authorList>
    </citation>
    <scope>NUCLEOTIDE SEQUENCE [MRNA] OF 368-474</scope>
</reference>
<proteinExistence type="evidence at protein level"/>
<evidence type="ECO:0000250" key="1"/>
<evidence type="ECO:0000250" key="2">
    <source>
        <dbReference type="UniProtKB" id="O43174"/>
    </source>
</evidence>
<evidence type="ECO:0000250" key="3">
    <source>
        <dbReference type="UniProtKB" id="O55127"/>
    </source>
</evidence>
<evidence type="ECO:0000255" key="4"/>
<evidence type="ECO:0000269" key="5">
    <source>
    </source>
</evidence>
<evidence type="ECO:0000303" key="6">
    <source>
    </source>
</evidence>
<evidence type="ECO:0000305" key="7"/>
<evidence type="ECO:0000305" key="8">
    <source>
    </source>
</evidence>
<sequence>MGFSALVASALCTFLLPLLLFLAAVRLWDLYCASGRDPSCPLPLPPGTMGLPFFGETLQMVLQRRKFLQMKRRKYGFIYKTHLFGRPTVRVMGAENVRHILLGEHRLVSVQWPASVRTILGSGCLSNLHNGQHKHRKKVIMQAFSRDALQHYVPVIQEEVSACLAQWLGAGPCLLVYPEVKRLMFRIAMRILLGFQPRQASPDGEQQLVEAFEEMIRNLFSLPIDVPFSGLYRGLRARNIIHAKIEENIRAKMARKEPEGGYKDALQLLMEHTQGNGEQLNMQELKESATELLFGGHETTASAATSLIAFLGLHHDVLQKVRKELQLKGLLSGPNQEKQLNMEFLEQLKYTGCVIKETLRLSPPVPGGFRIALKTLELNGYQIPKGWNVIYSICDTHDVADLFTDKDEFNPDRFMSPSPEDSSRFSFIPFGGGLRSCVGKEFAKVLLKIFTVELARSCDWQLLNGPPTMKTGPIVYPVDNLPAKFIGFSGQI</sequence>
<accession>Q9PUB4</accession>
<accession>Q9PUG2</accession>
<dbReference type="EC" id="1.14.13.-" evidence="5"/>
<dbReference type="EMBL" id="AF199462">
    <property type="protein sequence ID" value="AAF09250.1"/>
    <property type="molecule type" value="mRNA"/>
</dbReference>
<dbReference type="EMBL" id="AF185266">
    <property type="protein sequence ID" value="AAD56546.1"/>
    <property type="molecule type" value="mRNA"/>
</dbReference>
<dbReference type="RefSeq" id="NP_001001129.1">
    <property type="nucleotide sequence ID" value="NM_001001129.1"/>
</dbReference>
<dbReference type="SMR" id="Q9PUB4"/>
<dbReference type="FunCoup" id="Q9PUB4">
    <property type="interactions" value="325"/>
</dbReference>
<dbReference type="STRING" id="9031.ENSGALP00000045482"/>
<dbReference type="PaxDb" id="9031-ENSGALP00000010871"/>
<dbReference type="GeneID" id="408183"/>
<dbReference type="KEGG" id="gga:408183"/>
<dbReference type="CTD" id="1592"/>
<dbReference type="VEuPathDB" id="HostDB:geneid_408183"/>
<dbReference type="eggNOG" id="KOG0157">
    <property type="taxonomic scope" value="Eukaryota"/>
</dbReference>
<dbReference type="InParanoid" id="Q9PUB4"/>
<dbReference type="OrthoDB" id="1372046at2759"/>
<dbReference type="PhylomeDB" id="Q9PUB4"/>
<dbReference type="PRO" id="PR:Q9PUB4"/>
<dbReference type="Proteomes" id="UP000000539">
    <property type="component" value="Unassembled WGS sequence"/>
</dbReference>
<dbReference type="GO" id="GO:0005789">
    <property type="term" value="C:endoplasmic reticulum membrane"/>
    <property type="evidence" value="ECO:0007669"/>
    <property type="project" value="UniProtKB-SubCell"/>
</dbReference>
<dbReference type="GO" id="GO:0062183">
    <property type="term" value="F:all-trans retinoic acid 18-hydroxylase activity"/>
    <property type="evidence" value="ECO:0007669"/>
    <property type="project" value="RHEA"/>
</dbReference>
<dbReference type="GO" id="GO:0062182">
    <property type="term" value="F:all-trans retinoic acid 4-hydrolase activity"/>
    <property type="evidence" value="ECO:0007669"/>
    <property type="project" value="RHEA"/>
</dbReference>
<dbReference type="GO" id="GO:0020037">
    <property type="term" value="F:heme binding"/>
    <property type="evidence" value="ECO:0007669"/>
    <property type="project" value="InterPro"/>
</dbReference>
<dbReference type="GO" id="GO:0005506">
    <property type="term" value="F:iron ion binding"/>
    <property type="evidence" value="ECO:0007669"/>
    <property type="project" value="InterPro"/>
</dbReference>
<dbReference type="GO" id="GO:0004497">
    <property type="term" value="F:monooxygenase activity"/>
    <property type="evidence" value="ECO:0000318"/>
    <property type="project" value="GO_Central"/>
</dbReference>
<dbReference type="GO" id="GO:0008401">
    <property type="term" value="F:retinoic acid 4-hydroxylase activity"/>
    <property type="evidence" value="ECO:0000314"/>
    <property type="project" value="UniProtKB"/>
</dbReference>
<dbReference type="GO" id="GO:0007417">
    <property type="term" value="P:central nervous system development"/>
    <property type="evidence" value="ECO:0000318"/>
    <property type="project" value="GO_Central"/>
</dbReference>
<dbReference type="GO" id="GO:0034653">
    <property type="term" value="P:retinoic acid catabolic process"/>
    <property type="evidence" value="ECO:0000314"/>
    <property type="project" value="MGI"/>
</dbReference>
<dbReference type="CDD" id="cd20638">
    <property type="entry name" value="CYP26A1"/>
    <property type="match status" value="1"/>
</dbReference>
<dbReference type="FunFam" id="1.10.630.10:FF:000041">
    <property type="entry name" value="Cytochrome P450 26A1 isoform 1"/>
    <property type="match status" value="1"/>
</dbReference>
<dbReference type="Gene3D" id="1.10.630.10">
    <property type="entry name" value="Cytochrome P450"/>
    <property type="match status" value="1"/>
</dbReference>
<dbReference type="InterPro" id="IPR001128">
    <property type="entry name" value="Cyt_P450"/>
</dbReference>
<dbReference type="InterPro" id="IPR017972">
    <property type="entry name" value="Cyt_P450_CS"/>
</dbReference>
<dbReference type="InterPro" id="IPR002403">
    <property type="entry name" value="Cyt_P450_E_grp-IV"/>
</dbReference>
<dbReference type="InterPro" id="IPR036396">
    <property type="entry name" value="Cyt_P450_sf"/>
</dbReference>
<dbReference type="PANTHER" id="PTHR24286">
    <property type="entry name" value="CYTOCHROME P450 26"/>
    <property type="match status" value="1"/>
</dbReference>
<dbReference type="PANTHER" id="PTHR24286:SF101">
    <property type="entry name" value="CYTOCHROME P450 26A1"/>
    <property type="match status" value="1"/>
</dbReference>
<dbReference type="Pfam" id="PF00067">
    <property type="entry name" value="p450"/>
    <property type="match status" value="1"/>
</dbReference>
<dbReference type="PRINTS" id="PR00465">
    <property type="entry name" value="EP450IV"/>
</dbReference>
<dbReference type="PRINTS" id="PR00385">
    <property type="entry name" value="P450"/>
</dbReference>
<dbReference type="SUPFAM" id="SSF48264">
    <property type="entry name" value="Cytochrome P450"/>
    <property type="match status" value="1"/>
</dbReference>
<dbReference type="PROSITE" id="PS00086">
    <property type="entry name" value="CYTOCHROME_P450"/>
    <property type="match status" value="1"/>
</dbReference>